<keyword id="KW-0028">Amino-acid biosynthesis</keyword>
<keyword id="KW-0057">Aromatic amino acid biosynthesis</keyword>
<keyword id="KW-0456">Lyase</keyword>
<keyword id="KW-0704">Schiff base</keyword>
<evidence type="ECO:0000255" key="1">
    <source>
        <dbReference type="HAMAP-Rule" id="MF_00214"/>
    </source>
</evidence>
<feature type="chain" id="PRO_1000099905" description="3-dehydroquinate dehydratase">
    <location>
        <begin position="1"/>
        <end position="252"/>
    </location>
</feature>
<feature type="active site" description="Proton donor/acceptor" evidence="1">
    <location>
        <position position="143"/>
    </location>
</feature>
<feature type="active site" description="Schiff-base intermediate with substrate" evidence="1">
    <location>
        <position position="170"/>
    </location>
</feature>
<feature type="binding site" evidence="1">
    <location>
        <position position="21"/>
    </location>
    <ligand>
        <name>3-dehydroquinate</name>
        <dbReference type="ChEBI" id="CHEBI:32364"/>
    </ligand>
</feature>
<feature type="binding site" evidence="1">
    <location>
        <begin position="46"/>
        <end position="48"/>
    </location>
    <ligand>
        <name>3-dehydroquinate</name>
        <dbReference type="ChEBI" id="CHEBI:32364"/>
    </ligand>
</feature>
<feature type="binding site" evidence="1">
    <location>
        <position position="82"/>
    </location>
    <ligand>
        <name>3-dehydroquinate</name>
        <dbReference type="ChEBI" id="CHEBI:32364"/>
    </ligand>
</feature>
<feature type="binding site" evidence="1">
    <location>
        <position position="213"/>
    </location>
    <ligand>
        <name>3-dehydroquinate</name>
        <dbReference type="ChEBI" id="CHEBI:32364"/>
    </ligand>
</feature>
<feature type="binding site" evidence="1">
    <location>
        <position position="232"/>
    </location>
    <ligand>
        <name>3-dehydroquinate</name>
        <dbReference type="ChEBI" id="CHEBI:32364"/>
    </ligand>
</feature>
<feature type="binding site" evidence="1">
    <location>
        <position position="236"/>
    </location>
    <ligand>
        <name>3-dehydroquinate</name>
        <dbReference type="ChEBI" id="CHEBI:32364"/>
    </ligand>
</feature>
<name>AROD_ECODH</name>
<organism>
    <name type="scientific">Escherichia coli (strain K12 / DH10B)</name>
    <dbReference type="NCBI Taxonomy" id="316385"/>
    <lineage>
        <taxon>Bacteria</taxon>
        <taxon>Pseudomonadati</taxon>
        <taxon>Pseudomonadota</taxon>
        <taxon>Gammaproteobacteria</taxon>
        <taxon>Enterobacterales</taxon>
        <taxon>Enterobacteriaceae</taxon>
        <taxon>Escherichia</taxon>
    </lineage>
</organism>
<reference key="1">
    <citation type="journal article" date="2008" name="J. Bacteriol.">
        <title>The complete genome sequence of Escherichia coli DH10B: insights into the biology of a laboratory workhorse.</title>
        <authorList>
            <person name="Durfee T."/>
            <person name="Nelson R."/>
            <person name="Baldwin S."/>
            <person name="Plunkett G. III"/>
            <person name="Burland V."/>
            <person name="Mau B."/>
            <person name="Petrosino J.F."/>
            <person name="Qin X."/>
            <person name="Muzny D.M."/>
            <person name="Ayele M."/>
            <person name="Gibbs R.A."/>
            <person name="Csorgo B."/>
            <person name="Posfai G."/>
            <person name="Weinstock G.M."/>
            <person name="Blattner F.R."/>
        </authorList>
    </citation>
    <scope>NUCLEOTIDE SEQUENCE [LARGE SCALE GENOMIC DNA]</scope>
    <source>
        <strain>K12 / DH10B</strain>
    </source>
</reference>
<protein>
    <recommendedName>
        <fullName evidence="1">3-dehydroquinate dehydratase</fullName>
        <shortName evidence="1">3-dehydroquinase</shortName>
        <ecNumber evidence="1">4.2.1.10</ecNumber>
    </recommendedName>
    <alternativeName>
        <fullName evidence="1">Type I DHQase</fullName>
    </alternativeName>
    <alternativeName>
        <fullName evidence="1">Type I dehydroquinase</fullName>
        <shortName evidence="1">DHQ1</shortName>
    </alternativeName>
</protein>
<accession>B1XG01</accession>
<comment type="function">
    <text evidence="1">Involved in the third step of the chorismate pathway, which leads to the biosynthesis of aromatic amino acids. Catalyzes the cis-dehydration of 3-dehydroquinate (DHQ) and introduces the first double bond of the aromatic ring to yield 3-dehydroshikimate.</text>
</comment>
<comment type="catalytic activity">
    <reaction evidence="1">
        <text>3-dehydroquinate = 3-dehydroshikimate + H2O</text>
        <dbReference type="Rhea" id="RHEA:21096"/>
        <dbReference type="ChEBI" id="CHEBI:15377"/>
        <dbReference type="ChEBI" id="CHEBI:16630"/>
        <dbReference type="ChEBI" id="CHEBI:32364"/>
        <dbReference type="EC" id="4.2.1.10"/>
    </reaction>
</comment>
<comment type="pathway">
    <text evidence="1">Metabolic intermediate biosynthesis; chorismate biosynthesis; chorismate from D-erythrose 4-phosphate and phosphoenolpyruvate: step 3/7.</text>
</comment>
<comment type="subunit">
    <text evidence="1">Homodimer.</text>
</comment>
<comment type="similarity">
    <text evidence="1">Belongs to the type-I 3-dehydroquinase family.</text>
</comment>
<proteinExistence type="inferred from homology"/>
<sequence>MKTVTVKDLVIGTGAPKIIVSLMAKDIASVKSEALAYREADFDILEWRVDHYADLSNVESVMAAAKILRETMPEKPLLFTFRSAKEGGEQAISTEAYIALNRAAIDSGLVDMIDLELFTGDDQVKETVAYAHAHDVKVVMSNHDFHKTPEAEEIIARLRKMQSFDADIPKIALMPQSTSDVLTLLAATLEMQEQYADRPIITMSMAKTGVISRLAGEVFGSAATFGAVKKASAPGQISVNDLRTVLTILHQA</sequence>
<dbReference type="EC" id="4.2.1.10" evidence="1"/>
<dbReference type="EMBL" id="CP000948">
    <property type="protein sequence ID" value="ACB02895.1"/>
    <property type="molecule type" value="Genomic_DNA"/>
</dbReference>
<dbReference type="RefSeq" id="WP_000860201.1">
    <property type="nucleotide sequence ID" value="NC_010473.1"/>
</dbReference>
<dbReference type="SMR" id="B1XG01"/>
<dbReference type="KEGG" id="ecd:ECDH10B_1829"/>
<dbReference type="HOGENOM" id="CLU_064444_0_0_6"/>
<dbReference type="UniPathway" id="UPA00053">
    <property type="reaction ID" value="UER00086"/>
</dbReference>
<dbReference type="GO" id="GO:0003855">
    <property type="term" value="F:3-dehydroquinate dehydratase activity"/>
    <property type="evidence" value="ECO:0007669"/>
    <property type="project" value="UniProtKB-UniRule"/>
</dbReference>
<dbReference type="GO" id="GO:0046279">
    <property type="term" value="P:3,4-dihydroxybenzoate biosynthetic process"/>
    <property type="evidence" value="ECO:0007669"/>
    <property type="project" value="UniProtKB-ARBA"/>
</dbReference>
<dbReference type="GO" id="GO:0008652">
    <property type="term" value="P:amino acid biosynthetic process"/>
    <property type="evidence" value="ECO:0007669"/>
    <property type="project" value="UniProtKB-KW"/>
</dbReference>
<dbReference type="GO" id="GO:0009073">
    <property type="term" value="P:aromatic amino acid family biosynthetic process"/>
    <property type="evidence" value="ECO:0007669"/>
    <property type="project" value="UniProtKB-KW"/>
</dbReference>
<dbReference type="GO" id="GO:0009423">
    <property type="term" value="P:chorismate biosynthetic process"/>
    <property type="evidence" value="ECO:0007669"/>
    <property type="project" value="UniProtKB-UniRule"/>
</dbReference>
<dbReference type="CDD" id="cd00502">
    <property type="entry name" value="DHQase_I"/>
    <property type="match status" value="1"/>
</dbReference>
<dbReference type="FunFam" id="3.20.20.70:FF:000047">
    <property type="entry name" value="3-dehydroquinate dehydratase"/>
    <property type="match status" value="1"/>
</dbReference>
<dbReference type="Gene3D" id="3.20.20.70">
    <property type="entry name" value="Aldolase class I"/>
    <property type="match status" value="1"/>
</dbReference>
<dbReference type="HAMAP" id="MF_00214">
    <property type="entry name" value="AroD"/>
    <property type="match status" value="1"/>
</dbReference>
<dbReference type="InterPro" id="IPR018508">
    <property type="entry name" value="3-dehydroquinate_DH_AS"/>
</dbReference>
<dbReference type="InterPro" id="IPR013785">
    <property type="entry name" value="Aldolase_TIM"/>
</dbReference>
<dbReference type="InterPro" id="IPR001381">
    <property type="entry name" value="DHquinase_I"/>
</dbReference>
<dbReference type="InterPro" id="IPR050146">
    <property type="entry name" value="Type-I_3-dehydroquinase"/>
</dbReference>
<dbReference type="NCBIfam" id="TIGR01093">
    <property type="entry name" value="aroD"/>
    <property type="match status" value="1"/>
</dbReference>
<dbReference type="PANTHER" id="PTHR43699">
    <property type="entry name" value="3-DEHYDROQUINATE DEHYDRATASE"/>
    <property type="match status" value="1"/>
</dbReference>
<dbReference type="PANTHER" id="PTHR43699:SF1">
    <property type="entry name" value="3-DEHYDROQUINATE DEHYDRATASE"/>
    <property type="match status" value="1"/>
</dbReference>
<dbReference type="Pfam" id="PF01487">
    <property type="entry name" value="DHquinase_I"/>
    <property type="match status" value="1"/>
</dbReference>
<dbReference type="SUPFAM" id="SSF51569">
    <property type="entry name" value="Aldolase"/>
    <property type="match status" value="1"/>
</dbReference>
<dbReference type="PROSITE" id="PS01028">
    <property type="entry name" value="DEHYDROQUINASE_I"/>
    <property type="match status" value="1"/>
</dbReference>
<gene>
    <name evidence="1" type="primary">aroD</name>
    <name type="ordered locus">ECDH10B_1829</name>
</gene>